<keyword id="KW-0963">Cytoplasm</keyword>
<keyword id="KW-0378">Hydrolase</keyword>
<accession>Q4ZUD1</accession>
<evidence type="ECO:0000255" key="1">
    <source>
        <dbReference type="HAMAP-Rule" id="MF_01955"/>
    </source>
</evidence>
<name>URE23_PSEU2</name>
<sequence>MLLTPTELERLTLYTAAELSRKRRSKGLRLNFPEASALIADEILEGAREGRSVAELIGFGSTILNTDDVMPGVADLLPVLQVEGTFPDGTKLVTVHQPIRPGQLPLAVMPTPGEILAPDGDIHLNGDRPTATLRAINTGDRPVQIGSHYHFFEVNKALDFPRERAFGMHLDIPAGTAVRFEPGELREVQLVQFGGTGDIHGFSGLTNGNLHDPACKLAALERARAQFFKGA</sequence>
<dbReference type="EC" id="3.5.1.5" evidence="1"/>
<dbReference type="EMBL" id="CP000075">
    <property type="protein sequence ID" value="AAY37241.1"/>
    <property type="molecule type" value="Genomic_DNA"/>
</dbReference>
<dbReference type="RefSeq" id="WP_011267498.1">
    <property type="nucleotide sequence ID" value="NC_007005.1"/>
</dbReference>
<dbReference type="RefSeq" id="YP_235279.1">
    <property type="nucleotide sequence ID" value="NC_007005.1"/>
</dbReference>
<dbReference type="SMR" id="Q4ZUD1"/>
<dbReference type="STRING" id="205918.Psyr_2198"/>
<dbReference type="KEGG" id="psb:Psyr_2198"/>
<dbReference type="PATRIC" id="fig|205918.7.peg.2249"/>
<dbReference type="eggNOG" id="COG0831">
    <property type="taxonomic scope" value="Bacteria"/>
</dbReference>
<dbReference type="eggNOG" id="COG0832">
    <property type="taxonomic scope" value="Bacteria"/>
</dbReference>
<dbReference type="HOGENOM" id="CLU_000980_3_0_6"/>
<dbReference type="OrthoDB" id="9797217at2"/>
<dbReference type="UniPathway" id="UPA00258">
    <property type="reaction ID" value="UER00370"/>
</dbReference>
<dbReference type="Proteomes" id="UP000000426">
    <property type="component" value="Chromosome"/>
</dbReference>
<dbReference type="GO" id="GO:0035550">
    <property type="term" value="C:urease complex"/>
    <property type="evidence" value="ECO:0007669"/>
    <property type="project" value="InterPro"/>
</dbReference>
<dbReference type="GO" id="GO:0016151">
    <property type="term" value="F:nickel cation binding"/>
    <property type="evidence" value="ECO:0007669"/>
    <property type="project" value="InterPro"/>
</dbReference>
<dbReference type="GO" id="GO:0009039">
    <property type="term" value="F:urease activity"/>
    <property type="evidence" value="ECO:0007669"/>
    <property type="project" value="UniProtKB-UniRule"/>
</dbReference>
<dbReference type="GO" id="GO:0043419">
    <property type="term" value="P:urea catabolic process"/>
    <property type="evidence" value="ECO:0007669"/>
    <property type="project" value="UniProtKB-UniRule"/>
</dbReference>
<dbReference type="CDD" id="cd00407">
    <property type="entry name" value="Urease_beta"/>
    <property type="match status" value="1"/>
</dbReference>
<dbReference type="CDD" id="cd00390">
    <property type="entry name" value="Urease_gamma"/>
    <property type="match status" value="1"/>
</dbReference>
<dbReference type="Gene3D" id="2.10.150.10">
    <property type="entry name" value="Urease, beta subunit"/>
    <property type="match status" value="1"/>
</dbReference>
<dbReference type="Gene3D" id="3.30.280.10">
    <property type="entry name" value="Urease, gamma-like subunit"/>
    <property type="match status" value="1"/>
</dbReference>
<dbReference type="HAMAP" id="MF_01954">
    <property type="entry name" value="Urease_beta"/>
    <property type="match status" value="1"/>
</dbReference>
<dbReference type="HAMAP" id="MF_01955">
    <property type="entry name" value="Urease_beta_gamma"/>
    <property type="match status" value="1"/>
</dbReference>
<dbReference type="InterPro" id="IPR002019">
    <property type="entry name" value="Urease_beta-like"/>
</dbReference>
<dbReference type="InterPro" id="IPR036461">
    <property type="entry name" value="Urease_betasu_sf"/>
</dbReference>
<dbReference type="InterPro" id="IPR008223">
    <property type="entry name" value="Urease_gamma-beta_su"/>
</dbReference>
<dbReference type="InterPro" id="IPR002026">
    <property type="entry name" value="Urease_gamma/gamma-beta_su"/>
</dbReference>
<dbReference type="InterPro" id="IPR036463">
    <property type="entry name" value="Urease_gamma_sf"/>
</dbReference>
<dbReference type="InterPro" id="IPR050069">
    <property type="entry name" value="Urease_subunit"/>
</dbReference>
<dbReference type="NCBIfam" id="NF009671">
    <property type="entry name" value="PRK13192.1"/>
    <property type="match status" value="1"/>
</dbReference>
<dbReference type="NCBIfam" id="NF009682">
    <property type="entry name" value="PRK13203.1"/>
    <property type="match status" value="1"/>
</dbReference>
<dbReference type="NCBIfam" id="NF009712">
    <property type="entry name" value="PRK13241.1"/>
    <property type="match status" value="1"/>
</dbReference>
<dbReference type="NCBIfam" id="TIGR00192">
    <property type="entry name" value="urease_beta"/>
    <property type="match status" value="1"/>
</dbReference>
<dbReference type="NCBIfam" id="TIGR00193">
    <property type="entry name" value="urease_gam"/>
    <property type="match status" value="1"/>
</dbReference>
<dbReference type="PANTHER" id="PTHR33569">
    <property type="entry name" value="UREASE"/>
    <property type="match status" value="1"/>
</dbReference>
<dbReference type="PANTHER" id="PTHR33569:SF1">
    <property type="entry name" value="UREASE"/>
    <property type="match status" value="1"/>
</dbReference>
<dbReference type="Pfam" id="PF00699">
    <property type="entry name" value="Urease_beta"/>
    <property type="match status" value="1"/>
</dbReference>
<dbReference type="Pfam" id="PF00547">
    <property type="entry name" value="Urease_gamma"/>
    <property type="match status" value="1"/>
</dbReference>
<dbReference type="PIRSF" id="PIRSF001225">
    <property type="entry name" value="Urease_gammabeta"/>
    <property type="match status" value="1"/>
</dbReference>
<dbReference type="SUPFAM" id="SSF51278">
    <property type="entry name" value="Urease, beta-subunit"/>
    <property type="match status" value="1"/>
</dbReference>
<dbReference type="SUPFAM" id="SSF54111">
    <property type="entry name" value="Urease, gamma-subunit"/>
    <property type="match status" value="1"/>
</dbReference>
<organism>
    <name type="scientific">Pseudomonas syringae pv. syringae (strain B728a)</name>
    <dbReference type="NCBI Taxonomy" id="205918"/>
    <lineage>
        <taxon>Bacteria</taxon>
        <taxon>Pseudomonadati</taxon>
        <taxon>Pseudomonadota</taxon>
        <taxon>Gammaproteobacteria</taxon>
        <taxon>Pseudomonadales</taxon>
        <taxon>Pseudomonadaceae</taxon>
        <taxon>Pseudomonas</taxon>
        <taxon>Pseudomonas syringae</taxon>
    </lineage>
</organism>
<proteinExistence type="inferred from homology"/>
<comment type="catalytic activity">
    <reaction evidence="1">
        <text>urea + 2 H2O + H(+) = hydrogencarbonate + 2 NH4(+)</text>
        <dbReference type="Rhea" id="RHEA:20557"/>
        <dbReference type="ChEBI" id="CHEBI:15377"/>
        <dbReference type="ChEBI" id="CHEBI:15378"/>
        <dbReference type="ChEBI" id="CHEBI:16199"/>
        <dbReference type="ChEBI" id="CHEBI:17544"/>
        <dbReference type="ChEBI" id="CHEBI:28938"/>
        <dbReference type="EC" id="3.5.1.5"/>
    </reaction>
</comment>
<comment type="pathway">
    <text evidence="1">Nitrogen metabolism; urea degradation; CO(2) and NH(3) from urea (urease route): step 1/1.</text>
</comment>
<comment type="subunit">
    <text evidence="1">Heterohexamer of 3 UreC (alpha) and 3 UreAB (gamma/beta) subunits.</text>
</comment>
<comment type="subcellular location">
    <subcellularLocation>
        <location evidence="1">Cytoplasm</location>
    </subcellularLocation>
</comment>
<comment type="similarity">
    <text evidence="1">In the N-terminal section; belongs to the urease gamma subunit family.</text>
</comment>
<comment type="similarity">
    <text evidence="1">In the C-terminal section; belongs to the urease beta subunit family.</text>
</comment>
<reference key="1">
    <citation type="journal article" date="2005" name="Proc. Natl. Acad. Sci. U.S.A.">
        <title>Comparison of the complete genome sequences of Pseudomonas syringae pv. syringae B728a and pv. tomato DC3000.</title>
        <authorList>
            <person name="Feil H."/>
            <person name="Feil W.S."/>
            <person name="Chain P."/>
            <person name="Larimer F."/>
            <person name="Dibartolo G."/>
            <person name="Copeland A."/>
            <person name="Lykidis A."/>
            <person name="Trong S."/>
            <person name="Nolan M."/>
            <person name="Goltsman E."/>
            <person name="Thiel J."/>
            <person name="Malfatti S."/>
            <person name="Loper J.E."/>
            <person name="Lapidus A."/>
            <person name="Detter J.C."/>
            <person name="Land M."/>
            <person name="Richardson P.M."/>
            <person name="Kyrpides N.C."/>
            <person name="Ivanova N."/>
            <person name="Lindow S.E."/>
        </authorList>
    </citation>
    <scope>NUCLEOTIDE SEQUENCE [LARGE SCALE GENOMIC DNA]</scope>
    <source>
        <strain>B728a</strain>
    </source>
</reference>
<gene>
    <name evidence="1" type="primary">ureAB</name>
    <name type="ordered locus">Psyr_2198</name>
</gene>
<feature type="chain" id="PRO_0000234197" description="Urease subunit gamma/beta">
    <location>
        <begin position="1"/>
        <end position="231"/>
    </location>
</feature>
<feature type="region of interest" description="Urease gamma">
    <location>
        <begin position="1"/>
        <end position="101"/>
    </location>
</feature>
<feature type="region of interest" description="Urease beta">
    <location>
        <begin position="102"/>
        <end position="231"/>
    </location>
</feature>
<protein>
    <recommendedName>
        <fullName evidence="1">Urease subunit gamma/beta</fullName>
        <ecNumber evidence="1">3.5.1.5</ecNumber>
    </recommendedName>
    <alternativeName>
        <fullName evidence="1">Urea amidohydrolase subunit gamma/beta</fullName>
    </alternativeName>
</protein>